<organism>
    <name type="scientific">Shigella boydii serotype 4 (strain Sb227)</name>
    <dbReference type="NCBI Taxonomy" id="300268"/>
    <lineage>
        <taxon>Bacteria</taxon>
        <taxon>Pseudomonadati</taxon>
        <taxon>Pseudomonadota</taxon>
        <taxon>Gammaproteobacteria</taxon>
        <taxon>Enterobacterales</taxon>
        <taxon>Enterobacteriaceae</taxon>
        <taxon>Shigella</taxon>
    </lineage>
</organism>
<accession>Q31XM4</accession>
<feature type="chain" id="PRO_0000292973" description="Sulfite reductase [NADPH] flavoprotein alpha-component">
    <location>
        <begin position="1"/>
        <end position="599"/>
    </location>
</feature>
<feature type="domain" description="Flavodoxin-like" evidence="1">
    <location>
        <begin position="64"/>
        <end position="202"/>
    </location>
</feature>
<feature type="domain" description="FAD-binding FR-type" evidence="1">
    <location>
        <begin position="234"/>
        <end position="448"/>
    </location>
</feature>
<feature type="binding site" evidence="1">
    <location>
        <begin position="70"/>
        <end position="75"/>
    </location>
    <ligand>
        <name>FMN</name>
        <dbReference type="ChEBI" id="CHEBI:58210"/>
    </ligand>
</feature>
<feature type="binding site" evidence="1">
    <location>
        <begin position="117"/>
        <end position="120"/>
    </location>
    <ligand>
        <name>FMN</name>
        <dbReference type="ChEBI" id="CHEBI:58210"/>
    </ligand>
</feature>
<feature type="binding site" evidence="1">
    <location>
        <begin position="153"/>
        <end position="162"/>
    </location>
    <ligand>
        <name>FMN</name>
        <dbReference type="ChEBI" id="CHEBI:58210"/>
    </ligand>
</feature>
<feature type="binding site" evidence="1">
    <location>
        <position position="322"/>
    </location>
    <ligand>
        <name>FAD</name>
        <dbReference type="ChEBI" id="CHEBI:57692"/>
    </ligand>
</feature>
<feature type="binding site" evidence="1">
    <location>
        <position position="356"/>
    </location>
    <ligand>
        <name>FAD</name>
        <dbReference type="ChEBI" id="CHEBI:57692"/>
    </ligand>
</feature>
<feature type="binding site" evidence="1">
    <location>
        <begin position="386"/>
        <end position="389"/>
    </location>
    <ligand>
        <name>FAD</name>
        <dbReference type="ChEBI" id="CHEBI:57692"/>
    </ligand>
</feature>
<feature type="binding site" evidence="1">
    <location>
        <begin position="404"/>
        <end position="406"/>
    </location>
    <ligand>
        <name>FAD</name>
        <dbReference type="ChEBI" id="CHEBI:57692"/>
    </ligand>
</feature>
<feature type="binding site" evidence="1">
    <location>
        <position position="410"/>
    </location>
    <ligand>
        <name>FAD</name>
        <dbReference type="ChEBI" id="CHEBI:57692"/>
    </ligand>
</feature>
<feature type="binding site" evidence="1">
    <location>
        <begin position="419"/>
        <end position="422"/>
    </location>
    <ligand>
        <name>FAD</name>
        <dbReference type="ChEBI" id="CHEBI:57692"/>
    </ligand>
</feature>
<feature type="binding site" evidence="1">
    <location>
        <begin position="519"/>
        <end position="520"/>
    </location>
    <ligand>
        <name>NADP(+)</name>
        <dbReference type="ChEBI" id="CHEBI:58349"/>
    </ligand>
</feature>
<feature type="binding site" evidence="1">
    <location>
        <begin position="525"/>
        <end position="529"/>
    </location>
    <ligand>
        <name>NADP(+)</name>
        <dbReference type="ChEBI" id="CHEBI:58349"/>
    </ligand>
</feature>
<feature type="binding site" evidence="1">
    <location>
        <position position="561"/>
    </location>
    <ligand>
        <name>NADP(+)</name>
        <dbReference type="ChEBI" id="CHEBI:58349"/>
    </ligand>
</feature>
<feature type="binding site" evidence="1">
    <location>
        <position position="599"/>
    </location>
    <ligand>
        <name>FAD</name>
        <dbReference type="ChEBI" id="CHEBI:57692"/>
    </ligand>
</feature>
<comment type="function">
    <text evidence="1">Component of the sulfite reductase complex that catalyzes the 6-electron reduction of sulfite to sulfide. This is one of several activities required for the biosynthesis of L-cysteine from sulfate. The flavoprotein component catalyzes the electron flow from NADPH -&gt; FAD -&gt; FMN to the hemoprotein component.</text>
</comment>
<comment type="catalytic activity">
    <reaction evidence="1">
        <text>hydrogen sulfide + 3 NADP(+) + 3 H2O = sulfite + 3 NADPH + 4 H(+)</text>
        <dbReference type="Rhea" id="RHEA:13801"/>
        <dbReference type="ChEBI" id="CHEBI:15377"/>
        <dbReference type="ChEBI" id="CHEBI:15378"/>
        <dbReference type="ChEBI" id="CHEBI:17359"/>
        <dbReference type="ChEBI" id="CHEBI:29919"/>
        <dbReference type="ChEBI" id="CHEBI:57783"/>
        <dbReference type="ChEBI" id="CHEBI:58349"/>
        <dbReference type="EC" id="1.8.1.2"/>
    </reaction>
</comment>
<comment type="cofactor">
    <cofactor evidence="1">
        <name>FAD</name>
        <dbReference type="ChEBI" id="CHEBI:57692"/>
    </cofactor>
    <text evidence="1">Binds 1 FAD per subunit.</text>
</comment>
<comment type="cofactor">
    <cofactor evidence="1">
        <name>FMN</name>
        <dbReference type="ChEBI" id="CHEBI:58210"/>
    </cofactor>
    <text evidence="1">Binds 1 FMN per subunit.</text>
</comment>
<comment type="pathway">
    <text evidence="1">Sulfur metabolism; hydrogen sulfide biosynthesis; hydrogen sulfide from sulfite (NADPH route): step 1/1.</text>
</comment>
<comment type="subunit">
    <text evidence="1">Alpha(8)-beta(8). The alpha component is a flavoprotein, the beta component is a hemoprotein.</text>
</comment>
<comment type="similarity">
    <text evidence="1">Belongs to the NADPH-dependent sulphite reductase flavoprotein subunit CysJ family.</text>
</comment>
<comment type="similarity">
    <text evidence="1">In the N-terminal section; belongs to the flavodoxin family.</text>
</comment>
<comment type="similarity">
    <text evidence="1">In the C-terminal section; belongs to the flavoprotein pyridine nucleotide cytochrome reductase family.</text>
</comment>
<dbReference type="EC" id="1.8.1.2" evidence="1"/>
<dbReference type="EMBL" id="CP000036">
    <property type="protein sequence ID" value="ABB67184.1"/>
    <property type="molecule type" value="Genomic_DNA"/>
</dbReference>
<dbReference type="RefSeq" id="WP_000211905.1">
    <property type="nucleotide sequence ID" value="NC_007613.1"/>
</dbReference>
<dbReference type="SMR" id="Q31XM4"/>
<dbReference type="KEGG" id="sbo:SBO_2647"/>
<dbReference type="HOGENOM" id="CLU_001570_17_7_6"/>
<dbReference type="UniPathway" id="UPA00140">
    <property type="reaction ID" value="UER00207"/>
</dbReference>
<dbReference type="Proteomes" id="UP000007067">
    <property type="component" value="Chromosome"/>
</dbReference>
<dbReference type="GO" id="GO:0005829">
    <property type="term" value="C:cytosol"/>
    <property type="evidence" value="ECO:0007669"/>
    <property type="project" value="TreeGrafter"/>
</dbReference>
<dbReference type="GO" id="GO:0050660">
    <property type="term" value="F:flavin adenine dinucleotide binding"/>
    <property type="evidence" value="ECO:0007669"/>
    <property type="project" value="InterPro"/>
</dbReference>
<dbReference type="GO" id="GO:0010181">
    <property type="term" value="F:FMN binding"/>
    <property type="evidence" value="ECO:0007669"/>
    <property type="project" value="InterPro"/>
</dbReference>
<dbReference type="GO" id="GO:0004783">
    <property type="term" value="F:sulfite reductase (NADPH) activity"/>
    <property type="evidence" value="ECO:0007669"/>
    <property type="project" value="UniProtKB-UniRule"/>
</dbReference>
<dbReference type="GO" id="GO:0019344">
    <property type="term" value="P:cysteine biosynthetic process"/>
    <property type="evidence" value="ECO:0007669"/>
    <property type="project" value="UniProtKB-KW"/>
</dbReference>
<dbReference type="GO" id="GO:0070814">
    <property type="term" value="P:hydrogen sulfide biosynthetic process"/>
    <property type="evidence" value="ECO:0007669"/>
    <property type="project" value="UniProtKB-UniRule"/>
</dbReference>
<dbReference type="GO" id="GO:0000103">
    <property type="term" value="P:sulfate assimilation"/>
    <property type="evidence" value="ECO:0007669"/>
    <property type="project" value="UniProtKB-UniRule"/>
</dbReference>
<dbReference type="CDD" id="cd06199">
    <property type="entry name" value="SiR"/>
    <property type="match status" value="1"/>
</dbReference>
<dbReference type="FunFam" id="3.40.50.80:FF:000001">
    <property type="entry name" value="NADPH--cytochrome P450 reductase 1"/>
    <property type="match status" value="1"/>
</dbReference>
<dbReference type="FunFam" id="1.20.990.10:FF:000004">
    <property type="entry name" value="Sulfite reductase [NADPH] flavoprotein alpha-component"/>
    <property type="match status" value="1"/>
</dbReference>
<dbReference type="FunFam" id="3.40.50.360:FF:000018">
    <property type="entry name" value="Sulfite reductase [NADPH] flavoprotein alpha-component"/>
    <property type="match status" value="1"/>
</dbReference>
<dbReference type="Gene3D" id="3.40.50.360">
    <property type="match status" value="1"/>
</dbReference>
<dbReference type="Gene3D" id="1.20.990.10">
    <property type="entry name" value="NADPH-cytochrome p450 Reductase, Chain A, domain 3"/>
    <property type="match status" value="1"/>
</dbReference>
<dbReference type="Gene3D" id="3.40.50.80">
    <property type="entry name" value="Nucleotide-binding domain of ferredoxin-NADP reductase (FNR) module"/>
    <property type="match status" value="1"/>
</dbReference>
<dbReference type="Gene3D" id="2.40.30.10">
    <property type="entry name" value="Translation factors"/>
    <property type="match status" value="1"/>
</dbReference>
<dbReference type="HAMAP" id="MF_01541">
    <property type="entry name" value="CysJ"/>
    <property type="match status" value="1"/>
</dbReference>
<dbReference type="InterPro" id="IPR010199">
    <property type="entry name" value="CysJ"/>
</dbReference>
<dbReference type="InterPro" id="IPR003097">
    <property type="entry name" value="CysJ-like_FAD-binding"/>
</dbReference>
<dbReference type="InterPro" id="IPR029758">
    <property type="entry name" value="CysJ_Proteobact"/>
</dbReference>
<dbReference type="InterPro" id="IPR017927">
    <property type="entry name" value="FAD-bd_FR_type"/>
</dbReference>
<dbReference type="InterPro" id="IPR001094">
    <property type="entry name" value="Flavdoxin-like"/>
</dbReference>
<dbReference type="InterPro" id="IPR008254">
    <property type="entry name" value="Flavodoxin/NO_synth"/>
</dbReference>
<dbReference type="InterPro" id="IPR001709">
    <property type="entry name" value="Flavoprot_Pyr_Nucl_cyt_Rdtase"/>
</dbReference>
<dbReference type="InterPro" id="IPR029039">
    <property type="entry name" value="Flavoprotein-like_sf"/>
</dbReference>
<dbReference type="InterPro" id="IPR039261">
    <property type="entry name" value="FNR_nucleotide-bd"/>
</dbReference>
<dbReference type="InterPro" id="IPR023173">
    <property type="entry name" value="NADPH_Cyt_P450_Rdtase_alpha"/>
</dbReference>
<dbReference type="InterPro" id="IPR001433">
    <property type="entry name" value="OxRdtase_FAD/NAD-bd"/>
</dbReference>
<dbReference type="InterPro" id="IPR017938">
    <property type="entry name" value="Riboflavin_synthase-like_b-brl"/>
</dbReference>
<dbReference type="NCBIfam" id="TIGR01931">
    <property type="entry name" value="cysJ"/>
    <property type="match status" value="1"/>
</dbReference>
<dbReference type="NCBIfam" id="NF004859">
    <property type="entry name" value="PRK06214.1"/>
    <property type="match status" value="1"/>
</dbReference>
<dbReference type="NCBIfam" id="NF008197">
    <property type="entry name" value="PRK10953.1"/>
    <property type="match status" value="1"/>
</dbReference>
<dbReference type="PANTHER" id="PTHR19384:SF128">
    <property type="entry name" value="NADPH OXIDOREDUCTASE A"/>
    <property type="match status" value="1"/>
</dbReference>
<dbReference type="PANTHER" id="PTHR19384">
    <property type="entry name" value="NITRIC OXIDE SYNTHASE-RELATED"/>
    <property type="match status" value="1"/>
</dbReference>
<dbReference type="Pfam" id="PF00667">
    <property type="entry name" value="FAD_binding_1"/>
    <property type="match status" value="1"/>
</dbReference>
<dbReference type="Pfam" id="PF00258">
    <property type="entry name" value="Flavodoxin_1"/>
    <property type="match status" value="1"/>
</dbReference>
<dbReference type="Pfam" id="PF00175">
    <property type="entry name" value="NAD_binding_1"/>
    <property type="match status" value="1"/>
</dbReference>
<dbReference type="PIRSF" id="PIRSF000207">
    <property type="entry name" value="SiR-FP_CysJ"/>
    <property type="match status" value="1"/>
</dbReference>
<dbReference type="PRINTS" id="PR00369">
    <property type="entry name" value="FLAVODOXIN"/>
</dbReference>
<dbReference type="PRINTS" id="PR00371">
    <property type="entry name" value="FPNCR"/>
</dbReference>
<dbReference type="SUPFAM" id="SSF52343">
    <property type="entry name" value="Ferredoxin reductase-like, C-terminal NADP-linked domain"/>
    <property type="match status" value="1"/>
</dbReference>
<dbReference type="SUPFAM" id="SSF52218">
    <property type="entry name" value="Flavoproteins"/>
    <property type="match status" value="1"/>
</dbReference>
<dbReference type="SUPFAM" id="SSF63380">
    <property type="entry name" value="Riboflavin synthase domain-like"/>
    <property type="match status" value="1"/>
</dbReference>
<dbReference type="PROSITE" id="PS51384">
    <property type="entry name" value="FAD_FR"/>
    <property type="match status" value="1"/>
</dbReference>
<dbReference type="PROSITE" id="PS50902">
    <property type="entry name" value="FLAVODOXIN_LIKE"/>
    <property type="match status" value="1"/>
</dbReference>
<name>CYSJ_SHIBS</name>
<gene>
    <name evidence="1" type="primary">cysJ</name>
    <name type="ordered locus">SBO_2647</name>
</gene>
<keyword id="KW-0028">Amino-acid biosynthesis</keyword>
<keyword id="KW-0198">Cysteine biosynthesis</keyword>
<keyword id="KW-0249">Electron transport</keyword>
<keyword id="KW-0274">FAD</keyword>
<keyword id="KW-0285">Flavoprotein</keyword>
<keyword id="KW-0288">FMN</keyword>
<keyword id="KW-0521">NADP</keyword>
<keyword id="KW-0560">Oxidoreductase</keyword>
<keyword id="KW-0813">Transport</keyword>
<evidence type="ECO:0000255" key="1">
    <source>
        <dbReference type="HAMAP-Rule" id="MF_01541"/>
    </source>
</evidence>
<proteinExistence type="inferred from homology"/>
<sequence>MTTQVPPSALLPLNPEQLARLQAATTDLTPTQLAWVSGYFWGVLNQQPAALAATPAPAAEMPGITIISASQTGNARRVAEALRDDLLAAKLNVKLVNAGDYKFKQIASEKLLIVVTSTQGEGEPPEEAVALHKFLFSKKAPKLENTAFAVFSLGDSSYEFFCQSGKDFDSKLAELGGERLLDRVDADVEYQAAASEWRARVVDALKSRAPVAAPSQSVATGAVNEIHTSPYSKDAPLVASLSVNQKITGRNSEKDVRHIEIDLGDSGLRYQPGDALGVWYQNDPALVKELVELLWLKGDEPVTVEGKTLPLNEALQWHFELTVNTANIVENYATLTRSETLLPLVGDKAKLQHYAATTPIVDMVRFSPAQLDAEALINLLRPLTPRLYSIASSQAEVENEVHVTVGVVRYDVEGRARAGGASSFLADRVEEEGEVRVFIEHNDNFRLPANPETPVIMIGPGTGIAPFRAFMQQRAADEAPGKNWLFFGNPHFTEDFLYQVEWQRYVKDGVLTRIDLAWSRDQKEKVYVQDKLREQGAELWRWINDGAHIYVCGDANRMAKDVEQALLEVIAEFGGMDIEAADEFLSELRVERRYQRDVY</sequence>
<reference key="1">
    <citation type="journal article" date="2005" name="Nucleic Acids Res.">
        <title>Genome dynamics and diversity of Shigella species, the etiologic agents of bacillary dysentery.</title>
        <authorList>
            <person name="Yang F."/>
            <person name="Yang J."/>
            <person name="Zhang X."/>
            <person name="Chen L."/>
            <person name="Jiang Y."/>
            <person name="Yan Y."/>
            <person name="Tang X."/>
            <person name="Wang J."/>
            <person name="Xiong Z."/>
            <person name="Dong J."/>
            <person name="Xue Y."/>
            <person name="Zhu Y."/>
            <person name="Xu X."/>
            <person name="Sun L."/>
            <person name="Chen S."/>
            <person name="Nie H."/>
            <person name="Peng J."/>
            <person name="Xu J."/>
            <person name="Wang Y."/>
            <person name="Yuan Z."/>
            <person name="Wen Y."/>
            <person name="Yao Z."/>
            <person name="Shen Y."/>
            <person name="Qiang B."/>
            <person name="Hou Y."/>
            <person name="Yu J."/>
            <person name="Jin Q."/>
        </authorList>
    </citation>
    <scope>NUCLEOTIDE SEQUENCE [LARGE SCALE GENOMIC DNA]</scope>
    <source>
        <strain>Sb227</strain>
    </source>
</reference>
<protein>
    <recommendedName>
        <fullName evidence="1">Sulfite reductase [NADPH] flavoprotein alpha-component</fullName>
        <shortName evidence="1">SiR-FP</shortName>
        <ecNumber evidence="1">1.8.1.2</ecNumber>
    </recommendedName>
</protein>